<reference key="1">
    <citation type="journal article" date="2009" name="Appl. Environ. Microbiol.">
        <title>Three genomes from the phylum Acidobacteria provide insight into the lifestyles of these microorganisms in soils.</title>
        <authorList>
            <person name="Ward N.L."/>
            <person name="Challacombe J.F."/>
            <person name="Janssen P.H."/>
            <person name="Henrissat B."/>
            <person name="Coutinho P.M."/>
            <person name="Wu M."/>
            <person name="Xie G."/>
            <person name="Haft D.H."/>
            <person name="Sait M."/>
            <person name="Badger J."/>
            <person name="Barabote R.D."/>
            <person name="Bradley B."/>
            <person name="Brettin T.S."/>
            <person name="Brinkac L.M."/>
            <person name="Bruce D."/>
            <person name="Creasy T."/>
            <person name="Daugherty S.C."/>
            <person name="Davidsen T.M."/>
            <person name="DeBoy R.T."/>
            <person name="Detter J.C."/>
            <person name="Dodson R.J."/>
            <person name="Durkin A.S."/>
            <person name="Ganapathy A."/>
            <person name="Gwinn-Giglio M."/>
            <person name="Han C.S."/>
            <person name="Khouri H."/>
            <person name="Kiss H."/>
            <person name="Kothari S.P."/>
            <person name="Madupu R."/>
            <person name="Nelson K.E."/>
            <person name="Nelson W.C."/>
            <person name="Paulsen I."/>
            <person name="Penn K."/>
            <person name="Ren Q."/>
            <person name="Rosovitz M.J."/>
            <person name="Selengut J.D."/>
            <person name="Shrivastava S."/>
            <person name="Sullivan S.A."/>
            <person name="Tapia R."/>
            <person name="Thompson L.S."/>
            <person name="Watkins K.L."/>
            <person name="Yang Q."/>
            <person name="Yu C."/>
            <person name="Zafar N."/>
            <person name="Zhou L."/>
            <person name="Kuske C.R."/>
        </authorList>
    </citation>
    <scope>NUCLEOTIDE SEQUENCE [LARGE SCALE GENOMIC DNA]</scope>
    <source>
        <strain>ATCC 51196 / DSM 11244 / BCRC 80197 / JCM 7670 / NBRC 15755 / NCIMB 13165 / 161</strain>
    </source>
</reference>
<sequence>MAEVRLQEGEPLENALRRFKRKVQQEDIIKEVKRHSFYLKPGEKRRVKEALARKRNRKKARKEQD</sequence>
<evidence type="ECO:0000255" key="1">
    <source>
        <dbReference type="HAMAP-Rule" id="MF_00358"/>
    </source>
</evidence>
<evidence type="ECO:0000305" key="2"/>
<feature type="chain" id="PRO_1000133456" description="Small ribosomal subunit protein bS21">
    <location>
        <begin position="1"/>
        <end position="65"/>
    </location>
</feature>
<dbReference type="EMBL" id="CP001472">
    <property type="protein sequence ID" value="ACO32981.1"/>
    <property type="molecule type" value="Genomic_DNA"/>
</dbReference>
<dbReference type="RefSeq" id="WP_015897351.1">
    <property type="nucleotide sequence ID" value="NC_012483.1"/>
</dbReference>
<dbReference type="SMR" id="C1FA63"/>
<dbReference type="FunCoup" id="C1FA63">
    <property type="interactions" value="462"/>
</dbReference>
<dbReference type="STRING" id="240015.ACP_2257"/>
<dbReference type="KEGG" id="aca:ACP_2257"/>
<dbReference type="eggNOG" id="COG0828">
    <property type="taxonomic scope" value="Bacteria"/>
</dbReference>
<dbReference type="HOGENOM" id="CLU_159258_1_2_0"/>
<dbReference type="InParanoid" id="C1FA63"/>
<dbReference type="OrthoDB" id="9799244at2"/>
<dbReference type="Proteomes" id="UP000002207">
    <property type="component" value="Chromosome"/>
</dbReference>
<dbReference type="GO" id="GO:1990904">
    <property type="term" value="C:ribonucleoprotein complex"/>
    <property type="evidence" value="ECO:0007669"/>
    <property type="project" value="UniProtKB-KW"/>
</dbReference>
<dbReference type="GO" id="GO:0005840">
    <property type="term" value="C:ribosome"/>
    <property type="evidence" value="ECO:0007669"/>
    <property type="project" value="UniProtKB-KW"/>
</dbReference>
<dbReference type="GO" id="GO:0003735">
    <property type="term" value="F:structural constituent of ribosome"/>
    <property type="evidence" value="ECO:0007669"/>
    <property type="project" value="InterPro"/>
</dbReference>
<dbReference type="GO" id="GO:0006412">
    <property type="term" value="P:translation"/>
    <property type="evidence" value="ECO:0007669"/>
    <property type="project" value="UniProtKB-UniRule"/>
</dbReference>
<dbReference type="Gene3D" id="1.20.5.1150">
    <property type="entry name" value="Ribosomal protein S8"/>
    <property type="match status" value="1"/>
</dbReference>
<dbReference type="HAMAP" id="MF_00358">
    <property type="entry name" value="Ribosomal_bS21"/>
    <property type="match status" value="1"/>
</dbReference>
<dbReference type="InterPro" id="IPR001911">
    <property type="entry name" value="Ribosomal_bS21"/>
</dbReference>
<dbReference type="InterPro" id="IPR038380">
    <property type="entry name" value="Ribosomal_bS21_sf"/>
</dbReference>
<dbReference type="NCBIfam" id="TIGR00030">
    <property type="entry name" value="S21p"/>
    <property type="match status" value="1"/>
</dbReference>
<dbReference type="Pfam" id="PF01165">
    <property type="entry name" value="Ribosomal_S21"/>
    <property type="match status" value="1"/>
</dbReference>
<dbReference type="PRINTS" id="PR00976">
    <property type="entry name" value="RIBOSOMALS21"/>
</dbReference>
<keyword id="KW-1185">Reference proteome</keyword>
<keyword id="KW-0687">Ribonucleoprotein</keyword>
<keyword id="KW-0689">Ribosomal protein</keyword>
<protein>
    <recommendedName>
        <fullName evidence="1">Small ribosomal subunit protein bS21</fullName>
    </recommendedName>
    <alternativeName>
        <fullName evidence="2">30S ribosomal protein S21</fullName>
    </alternativeName>
</protein>
<accession>C1FA63</accession>
<comment type="similarity">
    <text evidence="1">Belongs to the bacterial ribosomal protein bS21 family.</text>
</comment>
<gene>
    <name evidence="1" type="primary">rpsU</name>
    <name type="ordered locus">ACP_2257</name>
</gene>
<proteinExistence type="inferred from homology"/>
<name>RS21_ACIC5</name>
<organism>
    <name type="scientific">Acidobacterium capsulatum (strain ATCC 51196 / DSM 11244 / BCRC 80197 / JCM 7670 / NBRC 15755 / NCIMB 13165 / 161)</name>
    <dbReference type="NCBI Taxonomy" id="240015"/>
    <lineage>
        <taxon>Bacteria</taxon>
        <taxon>Pseudomonadati</taxon>
        <taxon>Acidobacteriota</taxon>
        <taxon>Terriglobia</taxon>
        <taxon>Terriglobales</taxon>
        <taxon>Acidobacteriaceae</taxon>
        <taxon>Acidobacterium</taxon>
    </lineage>
</organism>